<proteinExistence type="evidence at protein level"/>
<comment type="function">
    <molecule>Isoform 2</molecule>
    <text evidence="2">Negatively regulates the plasma membrane cation channel TRPM8 activity. Involved in the recruitment of TRPM8 to the cell surface. Promotes prostate cancer cell migration stimulation in a TRPM8-dependent manner.</text>
</comment>
<comment type="subunit">
    <text evidence="2">Isoform 2 interacts with TRPM8 (via N-terminus and C-terminus domains); the interaction inhibits TRPM8 channel activity. Interacts with TRPV6.</text>
</comment>
<comment type="subcellular location">
    <molecule>Isoform 2</molecule>
    <subcellularLocation>
        <location evidence="2">Cell membrane</location>
    </subcellularLocation>
    <text evidence="2">Colocalizes with TRPM8 on the plasma membrane.</text>
</comment>
<comment type="alternative products">
    <event type="alternative splicing"/>
    <isoform>
        <id>A6NFQ2-1</id>
        <name>1</name>
        <sequence type="displayed"/>
    </isoform>
    <isoform>
        <id>A6NFQ2-2</id>
        <name>2</name>
        <sequence type="described" ref="VSP_031635"/>
    </isoform>
    <isoform>
        <id>A6NFQ2-3</id>
        <name>3</name>
        <sequence type="described" ref="VSP_042050 VSP_042051"/>
    </isoform>
</comment>
<comment type="tissue specificity">
    <text evidence="2">Isoform 2 is expressed in the prostate and in cancerous prostate samples.</text>
</comment>
<comment type="similarity">
    <text evidence="7">Belongs to the TCAF family.</text>
</comment>
<comment type="sequence caution" evidence="7">
    <conflict type="erroneous initiation">
        <sequence resource="EMBL-CDS" id="BAC03376"/>
    </conflict>
</comment>
<sequence>MATIAAAAFEALMDGVTCWDVPRGPIPSELLLIGEAAFPVMVNDKGQVLIAASSYGRGRLVVVSHEGYLSHTGLAPFLLNAVSWLCPCPGAPVGVHPSLAPLVNILQDAGLEAQVKPEPGEPLGVYCINAYNDTLTATLIQFVKHGGGLLIGGQAWYWASQHGPDKVLSRFPGNKVTSVAGVYFTDTYGDRDRFKVSKKVPKIPLHVRYGEDVRQDQQQLLEGISELDIRTGGVPSQLLVHGALAFPLGLDASLNCFLAAAHYGRGRVVLAAHECLLCAPKMGPFLLNAVRWLARGQTGKVGVNTNLKDLCPLLSEHGLQCSLEPHLNSDLCVYCCKAYSDKEAKQLQEFVAEGGGLLIGGQAWWWASQNPGHCPLAGFPGNIILNCFGLSILPQTLKAGCFPVPTPEMRSYHFRKALSQFQAILNHENGNLEKSCLAKLRVDGAAFLQIPAEGVPAYISLHRLLRKMLRGSGLPAVSRENPVASDSYEAAVLSLATGLAHSGTDCSQLAQGLGTWTCSSSLYPSKHPITVEINGINPGNNDCWVSTGLYLLEGQNAEVSLSEAAASAGLRVQIGCHTDDLTKARKLSRAPVVTHQCWMDRTERSVSCLWGGLLYVIVPKGSQLGPVPVTIRGAVPAPYYKLGKTSLEEWKRQMQENLAPWGELATDNIILTVPTTNLQALKDPEPVLRLWDEMMQAVARLAAEPFPFRRPERIVADVQISAGWMHSGYPIMCHLESVKEIINEMDMRSRGVWGPIHELGHNQQRHGWEFPPHTTEATCNLWSVYVHETVLGIPRAQAHEALSPPERERRIKAHLGKGAPLCDWNVWTALETYLQLQEAFGWEPFTQLFAEYQTLSHLPKDNTGRMNLWVKKFSEKVKKNLVPFFEAWGWPIQKEVADSLASLPEWQENPMQVYLRARK</sequence>
<reference key="1">
    <citation type="submission" date="2002-10" db="EMBL/GenBank/DDBJ databases">
        <authorList>
            <person name="Guo J.H."/>
            <person name="Yu L."/>
        </authorList>
    </citation>
    <scope>NUCLEOTIDE SEQUENCE [LARGE SCALE MRNA] (ISOFORM 2)</scope>
</reference>
<reference key="2">
    <citation type="journal article" date="2004" name="Nat. Genet.">
        <title>Complete sequencing and characterization of 21,243 full-length human cDNAs.</title>
        <authorList>
            <person name="Ota T."/>
            <person name="Suzuki Y."/>
            <person name="Nishikawa T."/>
            <person name="Otsuki T."/>
            <person name="Sugiyama T."/>
            <person name="Irie R."/>
            <person name="Wakamatsu A."/>
            <person name="Hayashi K."/>
            <person name="Sato H."/>
            <person name="Nagai K."/>
            <person name="Kimura K."/>
            <person name="Makita H."/>
            <person name="Sekine M."/>
            <person name="Obayashi M."/>
            <person name="Nishi T."/>
            <person name="Shibahara T."/>
            <person name="Tanaka T."/>
            <person name="Ishii S."/>
            <person name="Yamamoto J."/>
            <person name="Saito K."/>
            <person name="Kawai Y."/>
            <person name="Isono Y."/>
            <person name="Nakamura Y."/>
            <person name="Nagahari K."/>
            <person name="Murakami K."/>
            <person name="Yasuda T."/>
            <person name="Iwayanagi T."/>
            <person name="Wagatsuma M."/>
            <person name="Shiratori A."/>
            <person name="Sudo H."/>
            <person name="Hosoiri T."/>
            <person name="Kaku Y."/>
            <person name="Kodaira H."/>
            <person name="Kondo H."/>
            <person name="Sugawara M."/>
            <person name="Takahashi M."/>
            <person name="Kanda K."/>
            <person name="Yokoi T."/>
            <person name="Furuya T."/>
            <person name="Kikkawa E."/>
            <person name="Omura Y."/>
            <person name="Abe K."/>
            <person name="Kamihara K."/>
            <person name="Katsuta N."/>
            <person name="Sato K."/>
            <person name="Tanikawa M."/>
            <person name="Yamazaki M."/>
            <person name="Ninomiya K."/>
            <person name="Ishibashi T."/>
            <person name="Yamashita H."/>
            <person name="Murakawa K."/>
            <person name="Fujimori K."/>
            <person name="Tanai H."/>
            <person name="Kimata M."/>
            <person name="Watanabe M."/>
            <person name="Hiraoka S."/>
            <person name="Chiba Y."/>
            <person name="Ishida S."/>
            <person name="Ono Y."/>
            <person name="Takiguchi S."/>
            <person name="Watanabe S."/>
            <person name="Yosida M."/>
            <person name="Hotuta T."/>
            <person name="Kusano J."/>
            <person name="Kanehori K."/>
            <person name="Takahashi-Fujii A."/>
            <person name="Hara H."/>
            <person name="Tanase T.-O."/>
            <person name="Nomura Y."/>
            <person name="Togiya S."/>
            <person name="Komai F."/>
            <person name="Hara R."/>
            <person name="Takeuchi K."/>
            <person name="Arita M."/>
            <person name="Imose N."/>
            <person name="Musashino K."/>
            <person name="Yuuki H."/>
            <person name="Oshima A."/>
            <person name="Sasaki N."/>
            <person name="Aotsuka S."/>
            <person name="Yoshikawa Y."/>
            <person name="Matsunawa H."/>
            <person name="Ichihara T."/>
            <person name="Shiohata N."/>
            <person name="Sano S."/>
            <person name="Moriya S."/>
            <person name="Momiyama H."/>
            <person name="Satoh N."/>
            <person name="Takami S."/>
            <person name="Terashima Y."/>
            <person name="Suzuki O."/>
            <person name="Nakagawa S."/>
            <person name="Senoh A."/>
            <person name="Mizoguchi H."/>
            <person name="Goto Y."/>
            <person name="Shimizu F."/>
            <person name="Wakebe H."/>
            <person name="Hishigaki H."/>
            <person name="Watanabe T."/>
            <person name="Sugiyama A."/>
            <person name="Takemoto M."/>
            <person name="Kawakami B."/>
            <person name="Yamazaki M."/>
            <person name="Watanabe K."/>
            <person name="Kumagai A."/>
            <person name="Itakura S."/>
            <person name="Fukuzumi Y."/>
            <person name="Fujimori Y."/>
            <person name="Komiyama M."/>
            <person name="Tashiro H."/>
            <person name="Tanigami A."/>
            <person name="Fujiwara T."/>
            <person name="Ono T."/>
            <person name="Yamada K."/>
            <person name="Fujii Y."/>
            <person name="Ozaki K."/>
            <person name="Hirao M."/>
            <person name="Ohmori Y."/>
            <person name="Kawabata A."/>
            <person name="Hikiji T."/>
            <person name="Kobatake N."/>
            <person name="Inagaki H."/>
            <person name="Ikema Y."/>
            <person name="Okamoto S."/>
            <person name="Okitani R."/>
            <person name="Kawakami T."/>
            <person name="Noguchi S."/>
            <person name="Itoh T."/>
            <person name="Shigeta K."/>
            <person name="Senba T."/>
            <person name="Matsumura K."/>
            <person name="Nakajima Y."/>
            <person name="Mizuno T."/>
            <person name="Morinaga M."/>
            <person name="Sasaki M."/>
            <person name="Togashi T."/>
            <person name="Oyama M."/>
            <person name="Hata H."/>
            <person name="Watanabe M."/>
            <person name="Komatsu T."/>
            <person name="Mizushima-Sugano J."/>
            <person name="Satoh T."/>
            <person name="Shirai Y."/>
            <person name="Takahashi Y."/>
            <person name="Nakagawa K."/>
            <person name="Okumura K."/>
            <person name="Nagase T."/>
            <person name="Nomura N."/>
            <person name="Kikuchi H."/>
            <person name="Masuho Y."/>
            <person name="Yamashita R."/>
            <person name="Nakai K."/>
            <person name="Yada T."/>
            <person name="Nakamura Y."/>
            <person name="Ohara O."/>
            <person name="Isogai T."/>
            <person name="Sugano S."/>
        </authorList>
    </citation>
    <scope>NUCLEOTIDE SEQUENCE [LARGE SCALE MRNA] (ISOFORM 3)</scope>
    <source>
        <tissue>Thalamus</tissue>
    </source>
</reference>
<reference key="3">
    <citation type="journal article" date="2003" name="Nature">
        <title>The DNA sequence of human chromosome 7.</title>
        <authorList>
            <person name="Hillier L.W."/>
            <person name="Fulton R.S."/>
            <person name="Fulton L.A."/>
            <person name="Graves T.A."/>
            <person name="Pepin K.H."/>
            <person name="Wagner-McPherson C."/>
            <person name="Layman D."/>
            <person name="Maas J."/>
            <person name="Jaeger S."/>
            <person name="Walker R."/>
            <person name="Wylie K."/>
            <person name="Sekhon M."/>
            <person name="Becker M.C."/>
            <person name="O'Laughlin M.D."/>
            <person name="Schaller M.E."/>
            <person name="Fewell G.A."/>
            <person name="Delehaunty K.D."/>
            <person name="Miner T.L."/>
            <person name="Nash W.E."/>
            <person name="Cordes M."/>
            <person name="Du H."/>
            <person name="Sun H."/>
            <person name="Edwards J."/>
            <person name="Bradshaw-Cordum H."/>
            <person name="Ali J."/>
            <person name="Andrews S."/>
            <person name="Isak A."/>
            <person name="Vanbrunt A."/>
            <person name="Nguyen C."/>
            <person name="Du F."/>
            <person name="Lamar B."/>
            <person name="Courtney L."/>
            <person name="Kalicki J."/>
            <person name="Ozersky P."/>
            <person name="Bielicki L."/>
            <person name="Scott K."/>
            <person name="Holmes A."/>
            <person name="Harkins R."/>
            <person name="Harris A."/>
            <person name="Strong C.M."/>
            <person name="Hou S."/>
            <person name="Tomlinson C."/>
            <person name="Dauphin-Kohlberg S."/>
            <person name="Kozlowicz-Reilly A."/>
            <person name="Leonard S."/>
            <person name="Rohlfing T."/>
            <person name="Rock S.M."/>
            <person name="Tin-Wollam A.-M."/>
            <person name="Abbott A."/>
            <person name="Minx P."/>
            <person name="Maupin R."/>
            <person name="Strowmatt C."/>
            <person name="Latreille P."/>
            <person name="Miller N."/>
            <person name="Johnson D."/>
            <person name="Murray J."/>
            <person name="Woessner J.P."/>
            <person name="Wendl M.C."/>
            <person name="Yang S.-P."/>
            <person name="Schultz B.R."/>
            <person name="Wallis J.W."/>
            <person name="Spieth J."/>
            <person name="Bieri T.A."/>
            <person name="Nelson J.O."/>
            <person name="Berkowicz N."/>
            <person name="Wohldmann P.E."/>
            <person name="Cook L.L."/>
            <person name="Hickenbotham M.T."/>
            <person name="Eldred J."/>
            <person name="Williams D."/>
            <person name="Bedell J.A."/>
            <person name="Mardis E.R."/>
            <person name="Clifton S.W."/>
            <person name="Chissoe S.L."/>
            <person name="Marra M.A."/>
            <person name="Raymond C."/>
            <person name="Haugen E."/>
            <person name="Gillett W."/>
            <person name="Zhou Y."/>
            <person name="James R."/>
            <person name="Phelps K."/>
            <person name="Iadanoto S."/>
            <person name="Bubb K."/>
            <person name="Simms E."/>
            <person name="Levy R."/>
            <person name="Clendenning J."/>
            <person name="Kaul R."/>
            <person name="Kent W.J."/>
            <person name="Furey T.S."/>
            <person name="Baertsch R.A."/>
            <person name="Brent M.R."/>
            <person name="Keibler E."/>
            <person name="Flicek P."/>
            <person name="Bork P."/>
            <person name="Suyama M."/>
            <person name="Bailey J.A."/>
            <person name="Portnoy M.E."/>
            <person name="Torrents D."/>
            <person name="Chinwalla A.T."/>
            <person name="Gish W.R."/>
            <person name="Eddy S.R."/>
            <person name="McPherson J.D."/>
            <person name="Olson M.V."/>
            <person name="Eichler E.E."/>
            <person name="Green E.D."/>
            <person name="Waterston R.H."/>
            <person name="Wilson R.K."/>
        </authorList>
    </citation>
    <scope>NUCLEOTIDE SEQUENCE [LARGE SCALE GENOMIC DNA]</scope>
</reference>
<reference key="4">
    <citation type="journal article" date="2003" name="Science">
        <title>Human chromosome 7: DNA sequence and biology.</title>
        <authorList>
            <person name="Scherer S.W."/>
            <person name="Cheung J."/>
            <person name="MacDonald J.R."/>
            <person name="Osborne L.R."/>
            <person name="Nakabayashi K."/>
            <person name="Herbrick J.-A."/>
            <person name="Carson A.R."/>
            <person name="Parker-Katiraee L."/>
            <person name="Skaug J."/>
            <person name="Khaja R."/>
            <person name="Zhang J."/>
            <person name="Hudek A.K."/>
            <person name="Li M."/>
            <person name="Haddad M."/>
            <person name="Duggan G.E."/>
            <person name="Fernandez B.A."/>
            <person name="Kanematsu E."/>
            <person name="Gentles S."/>
            <person name="Christopoulos C.C."/>
            <person name="Choufani S."/>
            <person name="Kwasnicka D."/>
            <person name="Zheng X.H."/>
            <person name="Lai Z."/>
            <person name="Nusskern D.R."/>
            <person name="Zhang Q."/>
            <person name="Gu Z."/>
            <person name="Lu F."/>
            <person name="Zeesman S."/>
            <person name="Nowaczyk M.J."/>
            <person name="Teshima I."/>
            <person name="Chitayat D."/>
            <person name="Shuman C."/>
            <person name="Weksberg R."/>
            <person name="Zackai E.H."/>
            <person name="Grebe T.A."/>
            <person name="Cox S.R."/>
            <person name="Kirkpatrick S.J."/>
            <person name="Rahman N."/>
            <person name="Friedman J.M."/>
            <person name="Heng H.H.Q."/>
            <person name="Pelicci P.G."/>
            <person name="Lo-Coco F."/>
            <person name="Belloni E."/>
            <person name="Shaffer L.G."/>
            <person name="Pober B."/>
            <person name="Morton C.C."/>
            <person name="Gusella J.F."/>
            <person name="Bruns G.A.P."/>
            <person name="Korf B.R."/>
            <person name="Quade B.J."/>
            <person name="Ligon A.H."/>
            <person name="Ferguson H."/>
            <person name="Higgins A.W."/>
            <person name="Leach N.T."/>
            <person name="Herrick S.R."/>
            <person name="Lemyre E."/>
            <person name="Farra C.G."/>
            <person name="Kim H.-G."/>
            <person name="Summers A.M."/>
            <person name="Gripp K.W."/>
            <person name="Roberts W."/>
            <person name="Szatmari P."/>
            <person name="Winsor E.J.T."/>
            <person name="Grzeschik K.-H."/>
            <person name="Teebi A."/>
            <person name="Minassian B.A."/>
            <person name="Kere J."/>
            <person name="Armengol L."/>
            <person name="Pujana M.A."/>
            <person name="Estivill X."/>
            <person name="Wilson M.D."/>
            <person name="Koop B.F."/>
            <person name="Tosi S."/>
            <person name="Moore G.E."/>
            <person name="Boright A.P."/>
            <person name="Zlotorynski E."/>
            <person name="Kerem B."/>
            <person name="Kroisel P.M."/>
            <person name="Petek E."/>
            <person name="Oscier D.G."/>
            <person name="Mould S.J."/>
            <person name="Doehner H."/>
            <person name="Doehner K."/>
            <person name="Rommens J.M."/>
            <person name="Vincent J.B."/>
            <person name="Venter J.C."/>
            <person name="Li P.W."/>
            <person name="Mural R.J."/>
            <person name="Adams M.D."/>
            <person name="Tsui L.-C."/>
        </authorList>
    </citation>
    <scope>NUCLEOTIDE SEQUENCE [LARGE SCALE GENOMIC DNA]</scope>
</reference>
<reference key="5">
    <citation type="journal article" date="2004" name="Genome Res.">
        <title>The status, quality, and expansion of the NIH full-length cDNA project: the Mammalian Gene Collection (MGC).</title>
        <authorList>
            <consortium name="The MGC Project Team"/>
        </authorList>
    </citation>
    <scope>NUCLEOTIDE SEQUENCE [LARGE SCALE MRNA] (ISOFORM 2)</scope>
</reference>
<reference key="6">
    <citation type="journal article" date="2003" name="DNA Res.">
        <title>Characterization of long cDNA clones from human adult spleen. II. The complete sequences of 81 cDNA clones.</title>
        <authorList>
            <person name="Jikuya H."/>
            <person name="Takano J."/>
            <person name="Kikuno R."/>
            <person name="Hirosawa M."/>
            <person name="Nagase T."/>
            <person name="Nomura N."/>
            <person name="Ohara O."/>
        </authorList>
    </citation>
    <scope>NUCLEOTIDE SEQUENCE [LARGE SCALE MRNA] OF 289-919 (ISOFORM 1)</scope>
    <source>
        <tissue>Spleen</tissue>
    </source>
</reference>
<reference key="7">
    <citation type="journal article" date="2015" name="J. Cell Biol.">
        <title>TRP channel-associated factors are a novel protein family that regulates TRPM8 trafficking and activity.</title>
        <authorList>
            <person name="Gkika D."/>
            <person name="Lemonnier L."/>
            <person name="Shapovalov G."/>
            <person name="Gordienko D."/>
            <person name="Poux C."/>
            <person name="Bernardini M."/>
            <person name="Bokhobza A."/>
            <person name="Bidaux G."/>
            <person name="Degerny C."/>
            <person name="Verreman K."/>
            <person name="Guarmit B."/>
            <person name="Benahmed M."/>
            <person name="de Launoit Y."/>
            <person name="Bindels R.J."/>
            <person name="Fiorio Pla A."/>
            <person name="Prevarskaya N."/>
        </authorList>
    </citation>
    <scope>FUNCTION (ISOFORM 2)</scope>
    <scope>INTERACTION WITH TRPM8 AND TRPV6</scope>
    <scope>SUBCELLULAR LOCATION</scope>
    <scope>TISSUE SPECIFICITY</scope>
</reference>
<keyword id="KW-0025">Alternative splicing</keyword>
<keyword id="KW-1003">Cell membrane</keyword>
<keyword id="KW-0472">Membrane</keyword>
<keyword id="KW-1267">Proteomics identification</keyword>
<keyword id="KW-1185">Reference proteome</keyword>
<keyword id="KW-0813">Transport</keyword>
<dbReference type="EMBL" id="AY167570">
    <property type="protein sequence ID" value="AAN87343.1"/>
    <property type="molecule type" value="mRNA"/>
</dbReference>
<dbReference type="EMBL" id="AK296318">
    <property type="protein sequence ID" value="BAG59014.1"/>
    <property type="molecule type" value="mRNA"/>
</dbReference>
<dbReference type="EMBL" id="AC073264">
    <property type="status" value="NOT_ANNOTATED_CDS"/>
    <property type="molecule type" value="Genomic_DNA"/>
</dbReference>
<dbReference type="EMBL" id="AC106862">
    <property type="status" value="NOT_ANNOTATED_CDS"/>
    <property type="molecule type" value="Genomic_DNA"/>
</dbReference>
<dbReference type="EMBL" id="CH236959">
    <property type="protein sequence ID" value="EAL23793.1"/>
    <property type="molecule type" value="Genomic_DNA"/>
</dbReference>
<dbReference type="EMBL" id="BC113530">
    <property type="protein sequence ID" value="AAI13531.1"/>
    <property type="molecule type" value="mRNA"/>
</dbReference>
<dbReference type="EMBL" id="BC117233">
    <property type="protein sequence ID" value="AAI17234.1"/>
    <property type="molecule type" value="mRNA"/>
</dbReference>
<dbReference type="EMBL" id="AK090395">
    <property type="protein sequence ID" value="BAC03376.1"/>
    <property type="status" value="ALT_INIT"/>
    <property type="molecule type" value="mRNA"/>
</dbReference>
<dbReference type="CCDS" id="CCDS34769.1">
    <molecule id="A6NFQ2-2"/>
</dbReference>
<dbReference type="CCDS" id="CCDS47735.2">
    <molecule id="A6NFQ2-3"/>
</dbReference>
<dbReference type="CCDS" id="CCDS87559.1">
    <molecule id="A6NFQ2-1"/>
</dbReference>
<dbReference type="RefSeq" id="NP_001123497.1">
    <property type="nucleotide sequence ID" value="NM_001130025.1"/>
</dbReference>
<dbReference type="RefSeq" id="NP_001123498.2">
    <molecule id="A6NFQ2-3"/>
    <property type="nucleotide sequence ID" value="NM_001130026.3"/>
</dbReference>
<dbReference type="RefSeq" id="NP_001350467.1">
    <molecule id="A6NFQ2-1"/>
    <property type="nucleotide sequence ID" value="NM_001363538.2"/>
</dbReference>
<dbReference type="RefSeq" id="NP_775949.2">
    <molecule id="A6NFQ2-2"/>
    <property type="nucleotide sequence ID" value="NM_173678.3"/>
</dbReference>
<dbReference type="RefSeq" id="XP_006715990.1">
    <property type="nucleotide sequence ID" value="XM_006715927.3"/>
</dbReference>
<dbReference type="RefSeq" id="XP_006715991.1">
    <property type="nucleotide sequence ID" value="XM_006715928.3"/>
</dbReference>
<dbReference type="RefSeq" id="XP_047276173.1">
    <molecule id="A6NFQ2-1"/>
    <property type="nucleotide sequence ID" value="XM_047420217.1"/>
</dbReference>
<dbReference type="SMR" id="A6NFQ2"/>
<dbReference type="BioGRID" id="130260">
    <property type="interactions" value="47"/>
</dbReference>
<dbReference type="FunCoup" id="A6NFQ2">
    <property type="interactions" value="502"/>
</dbReference>
<dbReference type="IntAct" id="A6NFQ2">
    <property type="interactions" value="39"/>
</dbReference>
<dbReference type="STRING" id="9606.ENSP00000404265"/>
<dbReference type="MEROPS" id="M98.A03"/>
<dbReference type="GlyCosmos" id="A6NFQ2">
    <property type="glycosylation" value="1 site, 1 glycan"/>
</dbReference>
<dbReference type="GlyGen" id="A6NFQ2">
    <property type="glycosylation" value="2 sites, 1 O-linked glycan (1 site)"/>
</dbReference>
<dbReference type="iPTMnet" id="A6NFQ2"/>
<dbReference type="PhosphoSitePlus" id="A6NFQ2"/>
<dbReference type="BioMuta" id="TCAF2"/>
<dbReference type="jPOST" id="A6NFQ2"/>
<dbReference type="MassIVE" id="A6NFQ2"/>
<dbReference type="PaxDb" id="9606-ENSP00000412724"/>
<dbReference type="PeptideAtlas" id="A6NFQ2"/>
<dbReference type="ProteomicsDB" id="1064">
    <molecule id="A6NFQ2-1"/>
</dbReference>
<dbReference type="ProteomicsDB" id="1065">
    <molecule id="A6NFQ2-2"/>
</dbReference>
<dbReference type="ProteomicsDB" id="1066">
    <molecule id="A6NFQ2-3"/>
</dbReference>
<dbReference type="Pumba" id="A6NFQ2"/>
<dbReference type="Antibodypedia" id="51007">
    <property type="antibodies" value="37 antibodies from 13 providers"/>
</dbReference>
<dbReference type="DNASU" id="285966"/>
<dbReference type="Ensembl" id="ENST00000357344.9">
    <molecule id="A6NFQ2-2"/>
    <property type="protein sequence ID" value="ENSP00000349902.4"/>
    <property type="gene ID" value="ENSG00000170379.21"/>
</dbReference>
<dbReference type="Ensembl" id="ENST00000411935.5">
    <molecule id="A6NFQ2-3"/>
    <property type="protein sequence ID" value="ENSP00000389100.1"/>
    <property type="gene ID" value="ENSG00000170379.21"/>
</dbReference>
<dbReference type="Ensembl" id="ENST00000425618.3">
    <molecule id="A6NFQ2-3"/>
    <property type="protein sequence ID" value="ENSP00000441099.2"/>
    <property type="gene ID" value="ENSG00000170379.21"/>
</dbReference>
<dbReference type="Ensembl" id="ENST00000441159.7">
    <molecule id="A6NFQ2-1"/>
    <property type="protein sequence ID" value="ENSP00000404265.2"/>
    <property type="gene ID" value="ENSG00000170379.21"/>
</dbReference>
<dbReference type="Ensembl" id="ENST00000444908.7">
    <molecule id="A6NFQ2-2"/>
    <property type="protein sequence ID" value="ENSP00000412724.2"/>
    <property type="gene ID" value="ENSG00000170379.21"/>
</dbReference>
<dbReference type="Ensembl" id="ENST00000643242.1">
    <molecule id="A6NFQ2-2"/>
    <property type="protein sequence ID" value="ENSP00000495809.1"/>
    <property type="gene ID" value="ENSG00000170379.21"/>
</dbReference>
<dbReference type="Ensembl" id="ENST00000684770.1">
    <molecule id="A6NFQ2-1"/>
    <property type="protein sequence ID" value="ENSP00000506869.1"/>
    <property type="gene ID" value="ENSG00000170379.21"/>
</dbReference>
<dbReference type="GeneID" id="285966"/>
<dbReference type="KEGG" id="hsa:285966"/>
<dbReference type="MANE-Select" id="ENST00000684770.1">
    <property type="protein sequence ID" value="ENSP00000506869.1"/>
    <property type="RefSeq nucleotide sequence ID" value="NM_001363538.2"/>
    <property type="RefSeq protein sequence ID" value="NP_001350467.1"/>
</dbReference>
<dbReference type="UCSC" id="uc003wdf.4">
    <molecule id="A6NFQ2-1"/>
    <property type="organism name" value="human"/>
</dbReference>
<dbReference type="AGR" id="HGNC:26878"/>
<dbReference type="CTD" id="285966"/>
<dbReference type="DisGeNET" id="285966"/>
<dbReference type="GeneCards" id="TCAF2"/>
<dbReference type="HGNC" id="HGNC:26878">
    <property type="gene designation" value="TCAF2"/>
</dbReference>
<dbReference type="HPA" id="ENSG00000170379">
    <property type="expression patterns" value="Low tissue specificity"/>
</dbReference>
<dbReference type="MIM" id="616252">
    <property type="type" value="gene"/>
</dbReference>
<dbReference type="neXtProt" id="NX_A6NFQ2"/>
<dbReference type="OpenTargets" id="ENSG00000170379"/>
<dbReference type="PharmGKB" id="PA162385772"/>
<dbReference type="VEuPathDB" id="HostDB:ENSG00000170379"/>
<dbReference type="eggNOG" id="ENOG502QQUS">
    <property type="taxonomic scope" value="Eukaryota"/>
</dbReference>
<dbReference type="GeneTree" id="ENSGT00390000017365"/>
<dbReference type="HOGENOM" id="CLU_011215_0_0_1"/>
<dbReference type="InParanoid" id="A6NFQ2"/>
<dbReference type="OMA" id="SCEATML"/>
<dbReference type="OrthoDB" id="10260387at2759"/>
<dbReference type="PAN-GO" id="A6NFQ2">
    <property type="GO annotations" value="4 GO annotations based on evolutionary models"/>
</dbReference>
<dbReference type="PhylomeDB" id="A6NFQ2"/>
<dbReference type="TreeFam" id="TF331520"/>
<dbReference type="PathwayCommons" id="A6NFQ2"/>
<dbReference type="SignaLink" id="A6NFQ2"/>
<dbReference type="BioGRID-ORCS" id="285966">
    <property type="hits" value="6 hits in 1108 CRISPR screens"/>
</dbReference>
<dbReference type="GenomeRNAi" id="285966"/>
<dbReference type="Pharos" id="A6NFQ2">
    <property type="development level" value="Tbio"/>
</dbReference>
<dbReference type="PRO" id="PR:A6NFQ2"/>
<dbReference type="Proteomes" id="UP000005640">
    <property type="component" value="Chromosome 7"/>
</dbReference>
<dbReference type="RNAct" id="A6NFQ2">
    <property type="molecule type" value="protein"/>
</dbReference>
<dbReference type="Bgee" id="ENSG00000170379">
    <property type="expression patterns" value="Expressed in islet of Langerhans and 103 other cell types or tissues"/>
</dbReference>
<dbReference type="ExpressionAtlas" id="A6NFQ2">
    <property type="expression patterns" value="baseline and differential"/>
</dbReference>
<dbReference type="GO" id="GO:0030054">
    <property type="term" value="C:cell junction"/>
    <property type="evidence" value="ECO:0000314"/>
    <property type="project" value="HPA"/>
</dbReference>
<dbReference type="GO" id="GO:0005886">
    <property type="term" value="C:plasma membrane"/>
    <property type="evidence" value="ECO:0000314"/>
    <property type="project" value="HPA"/>
</dbReference>
<dbReference type="GO" id="GO:0044325">
    <property type="term" value="F:transmembrane transporter binding"/>
    <property type="evidence" value="ECO:0000314"/>
    <property type="project" value="MGI"/>
</dbReference>
<dbReference type="GO" id="GO:0010360">
    <property type="term" value="P:negative regulation of anion channel activity"/>
    <property type="evidence" value="ECO:0000314"/>
    <property type="project" value="UniProtKB"/>
</dbReference>
<dbReference type="GO" id="GO:0030335">
    <property type="term" value="P:positive regulation of cell migration"/>
    <property type="evidence" value="ECO:0000314"/>
    <property type="project" value="UniProtKB"/>
</dbReference>
<dbReference type="GO" id="GO:0090314">
    <property type="term" value="P:positive regulation of protein targeting to membrane"/>
    <property type="evidence" value="ECO:0000315"/>
    <property type="project" value="UniProtKB"/>
</dbReference>
<dbReference type="FunFam" id="1.10.390.30:FF:000001">
    <property type="entry name" value="TRPM8 channel-associated factor 1"/>
    <property type="match status" value="1"/>
</dbReference>
<dbReference type="FunFam" id="3.40.390.80:FF:000001">
    <property type="entry name" value="TRPM8 channel-associated factor 1"/>
    <property type="match status" value="1"/>
</dbReference>
<dbReference type="Gene3D" id="3.40.390.80">
    <property type="entry name" value="Peptidase M60, enhancin-like domain 2"/>
    <property type="match status" value="1"/>
</dbReference>
<dbReference type="Gene3D" id="1.10.390.30">
    <property type="entry name" value="Peptidase M60, enhancin-like domain 3"/>
    <property type="match status" value="1"/>
</dbReference>
<dbReference type="InterPro" id="IPR029062">
    <property type="entry name" value="Class_I_gatase-like"/>
</dbReference>
<dbReference type="InterPro" id="IPR035423">
    <property type="entry name" value="M60-like_N"/>
</dbReference>
<dbReference type="InterPro" id="IPR042279">
    <property type="entry name" value="Pep_M60_3"/>
</dbReference>
<dbReference type="InterPro" id="IPR031161">
    <property type="entry name" value="Peptidase_M60_dom"/>
</dbReference>
<dbReference type="InterPro" id="IPR051244">
    <property type="entry name" value="TCAF"/>
</dbReference>
<dbReference type="PANTHER" id="PTHR15730">
    <property type="entry name" value="EXPERIMENTAL AUTOIMMUNE PROSTATITIS ANTIGEN 2-RELATED"/>
    <property type="match status" value="1"/>
</dbReference>
<dbReference type="PANTHER" id="PTHR15730:SF4">
    <property type="entry name" value="TRPM8 CHANNEL-ASSOCIATED FACTOR 2"/>
    <property type="match status" value="1"/>
</dbReference>
<dbReference type="Pfam" id="PF17291">
    <property type="entry name" value="M60-like_N"/>
    <property type="match status" value="1"/>
</dbReference>
<dbReference type="Pfam" id="PF13402">
    <property type="entry name" value="Peptidase_M60"/>
    <property type="match status" value="1"/>
</dbReference>
<dbReference type="SMART" id="SM01276">
    <property type="entry name" value="M60-like"/>
    <property type="match status" value="1"/>
</dbReference>
<dbReference type="SUPFAM" id="SSF52317">
    <property type="entry name" value="Class I glutamine amidotransferase-like"/>
    <property type="match status" value="1"/>
</dbReference>
<dbReference type="PROSITE" id="PS51723">
    <property type="entry name" value="PEPTIDASE_M60"/>
    <property type="match status" value="1"/>
</dbReference>
<feature type="chain" id="PRO_0000320187" description="TRPM8 channel-associated factor 2">
    <location>
        <begin position="1"/>
        <end position="919"/>
    </location>
</feature>
<feature type="domain" description="Peptidase M60" evidence="1">
    <location>
        <begin position="542"/>
        <end position="841"/>
    </location>
</feature>
<feature type="splice variant" id="VSP_042050" description="In isoform 3." evidence="3">
    <original>MATIAAAAFEALMDGVTCWDVPRGPIPSELLLIGEAAFPVMVNDKGQVLIAASSYGRGRLVVVSHEGYLSHTGLAPFLLNAVSWLCPCPGAPVGVHPSLAPLVNILQDAGLEAQVKPEPGEPLGVYCINAYNDTLTATLIQFVKHGGGLLIGGQAWYWASQHGPDKVLSRFPGNKVTSVAGVYFTDTYGDRDRFKVSKKVPKIPLHV</original>
    <variation>MKIFQKEFKFILKKCTPIQKYREENGNSSSSPHHQLQSHASGP</variation>
    <location>
        <begin position="1"/>
        <end position="207"/>
    </location>
</feature>
<feature type="splice variant" id="VSP_042051" description="In isoform 3." evidence="3">
    <original>P</original>
    <variation>PESHSVIQVGMQWRDLSSCNLHLLGLSNSSLSASCVAGTTGTRHHAWLIFVFLVEREFHRK</variation>
    <location>
        <position position="538"/>
    </location>
</feature>
<feature type="splice variant" id="VSP_031635" description="In isoform 2." evidence="4 6">
    <original>LQEAFGWEPFTQLFAEYQTLSHLPKDNTGRMNLWVKKFSEKVKKNLVPFFEAWGWPIQKEVADSLASLPEWQENPMQVYLRARK</original>
    <variation>VLSRNSGRRG</variation>
    <location>
        <begin position="836"/>
        <end position="919"/>
    </location>
</feature>
<feature type="sequence conflict" description="In Ref. 1; AAN87343 and 5; AAI17234." evidence="7" ref="1 5">
    <original>T</original>
    <variation>A</variation>
    <location>
        <position position="72"/>
    </location>
</feature>
<feature type="sequence conflict" description="In Ref. 5; AAI17234 and 6; BAC03376." evidence="7" ref="5 6">
    <original>V</original>
    <variation>M</variation>
    <location>
        <position position="592"/>
    </location>
</feature>
<gene>
    <name evidence="8" type="primary">TCAF2</name>
    <name evidence="8" type="synonym">FAM115C</name>
    <name evidence="8" type="synonym">FAM139A</name>
</gene>
<protein>
    <recommendedName>
        <fullName evidence="5">TRPM8 channel-associated factor 2</fullName>
    </recommendedName>
    <alternativeName>
        <fullName evidence="5">TRP channel-associated factor 2</fullName>
    </alternativeName>
</protein>
<accession>A6NFQ2</accession>
<accession>B4DK02</accession>
<accession>Q14D25</accession>
<accession>Q17RQ4</accession>
<accession>Q8IWQ0</accession>
<accession>Q8NF84</accession>
<evidence type="ECO:0000255" key="1">
    <source>
        <dbReference type="PROSITE-ProRule" id="PRU01060"/>
    </source>
</evidence>
<evidence type="ECO:0000269" key="2">
    <source>
    </source>
</evidence>
<evidence type="ECO:0000303" key="3">
    <source>
    </source>
</evidence>
<evidence type="ECO:0000303" key="4">
    <source>
    </source>
</evidence>
<evidence type="ECO:0000303" key="5">
    <source>
    </source>
</evidence>
<evidence type="ECO:0000303" key="6">
    <source ref="1"/>
</evidence>
<evidence type="ECO:0000305" key="7"/>
<evidence type="ECO:0000312" key="8">
    <source>
        <dbReference type="HGNC" id="HGNC:26878"/>
    </source>
</evidence>
<organism>
    <name type="scientific">Homo sapiens</name>
    <name type="common">Human</name>
    <dbReference type="NCBI Taxonomy" id="9606"/>
    <lineage>
        <taxon>Eukaryota</taxon>
        <taxon>Metazoa</taxon>
        <taxon>Chordata</taxon>
        <taxon>Craniata</taxon>
        <taxon>Vertebrata</taxon>
        <taxon>Euteleostomi</taxon>
        <taxon>Mammalia</taxon>
        <taxon>Eutheria</taxon>
        <taxon>Euarchontoglires</taxon>
        <taxon>Primates</taxon>
        <taxon>Haplorrhini</taxon>
        <taxon>Catarrhini</taxon>
        <taxon>Hominidae</taxon>
        <taxon>Homo</taxon>
    </lineage>
</organism>
<name>TCAF2_HUMAN</name>